<protein>
    <recommendedName>
        <fullName evidence="1">ADP-L-glycero-D-manno-heptose-6-epimerase</fullName>
        <ecNumber evidence="1">5.1.3.20</ecNumber>
    </recommendedName>
    <alternativeName>
        <fullName evidence="1">ADP-L-glycero-beta-D-manno-heptose-6-epimerase</fullName>
        <shortName evidence="1">ADP-glyceromanno-heptose 6-epimerase</shortName>
        <shortName evidence="1">ADP-hep 6-epimerase</shortName>
        <shortName evidence="1">AGME</shortName>
    </alternativeName>
</protein>
<keyword id="KW-0119">Carbohydrate metabolism</keyword>
<keyword id="KW-0413">Isomerase</keyword>
<keyword id="KW-0521">NADP</keyword>
<keyword id="KW-1185">Reference proteome</keyword>
<organism>
    <name type="scientific">Aeromonas hydrophila subsp. hydrophila (strain ATCC 7966 / DSM 30187 / BCRC 13018 / CCUG 14551 / JCM 1027 / KCTC 2358 / NCIMB 9240 / NCTC 8049)</name>
    <dbReference type="NCBI Taxonomy" id="380703"/>
    <lineage>
        <taxon>Bacteria</taxon>
        <taxon>Pseudomonadati</taxon>
        <taxon>Pseudomonadota</taxon>
        <taxon>Gammaproteobacteria</taxon>
        <taxon>Aeromonadales</taxon>
        <taxon>Aeromonadaceae</taxon>
        <taxon>Aeromonas</taxon>
    </lineage>
</organism>
<sequence length="318" mass="36162">MIVVTGGAGFIGSNLVKQLNAQGRTDVVVIDDLTDGTKFVNLVDLTIADYMDKDEFQARIVSGDEFEEWDGGIEVIFHEGACSATTEWNGKFIMEVNYEYSKDLFHYCIEREIPFIYASSAATYGGRNDNFIEDPKFEQPLNVYGYSKQLFDQYVRRWMPEINSQVVGLKYFNVYGPREQHKGSMASVAFHLNTQVKKGENPKLFEGCDGFPNGGQMRDFIYVDDVCKVNLWFWLNPQHSGIFNCGTGRAEPFQNVAEAVIKHHQKGAIEYIPFPDHLKGRYQSFTQADMTKLRGVGYDAEFKTVAEGVADYMAWLNR</sequence>
<name>HLDD_AERHH</name>
<comment type="function">
    <text evidence="1">Catalyzes the interconversion between ADP-D-glycero-beta-D-manno-heptose and ADP-L-glycero-beta-D-manno-heptose via an epimerization at carbon 6 of the heptose.</text>
</comment>
<comment type="catalytic activity">
    <reaction evidence="1">
        <text>ADP-D-glycero-beta-D-manno-heptose = ADP-L-glycero-beta-D-manno-heptose</text>
        <dbReference type="Rhea" id="RHEA:17577"/>
        <dbReference type="ChEBI" id="CHEBI:59967"/>
        <dbReference type="ChEBI" id="CHEBI:61506"/>
        <dbReference type="EC" id="5.1.3.20"/>
    </reaction>
</comment>
<comment type="cofactor">
    <cofactor evidence="1">
        <name>NADP(+)</name>
        <dbReference type="ChEBI" id="CHEBI:58349"/>
    </cofactor>
    <text evidence="1">Binds 1 NADP(+) per subunit.</text>
</comment>
<comment type="pathway">
    <text evidence="1">Nucleotide-sugar biosynthesis; ADP-L-glycero-beta-D-manno-heptose biosynthesis; ADP-L-glycero-beta-D-manno-heptose from D-glycero-beta-D-manno-heptose 7-phosphate: step 4/4.</text>
</comment>
<comment type="subunit">
    <text evidence="1">Homopentamer.</text>
</comment>
<comment type="domain">
    <text evidence="1">Contains a large N-terminal NADP-binding domain, and a smaller C-terminal substrate-binding domain.</text>
</comment>
<comment type="similarity">
    <text evidence="1">Belongs to the NAD(P)-dependent epimerase/dehydratase family. HldD subfamily.</text>
</comment>
<dbReference type="EC" id="5.1.3.20" evidence="1"/>
<dbReference type="EMBL" id="CP000462">
    <property type="protein sequence ID" value="ABK35918.1"/>
    <property type="molecule type" value="Genomic_DNA"/>
</dbReference>
<dbReference type="RefSeq" id="YP_858654.1">
    <property type="nucleotide sequence ID" value="NC_008570.1"/>
</dbReference>
<dbReference type="SMR" id="A0KQV3"/>
<dbReference type="STRING" id="380703.AHA_4232"/>
<dbReference type="EnsemblBacteria" id="ABK35918">
    <property type="protein sequence ID" value="ABK35918"/>
    <property type="gene ID" value="AHA_4232"/>
</dbReference>
<dbReference type="GeneID" id="4488001"/>
<dbReference type="KEGG" id="aha:AHA_4232"/>
<dbReference type="PATRIC" id="fig|380703.7.peg.4186"/>
<dbReference type="eggNOG" id="COG0451">
    <property type="taxonomic scope" value="Bacteria"/>
</dbReference>
<dbReference type="HOGENOM" id="CLU_007383_1_3_6"/>
<dbReference type="OrthoDB" id="9803010at2"/>
<dbReference type="UniPathway" id="UPA00356">
    <property type="reaction ID" value="UER00440"/>
</dbReference>
<dbReference type="Proteomes" id="UP000000756">
    <property type="component" value="Chromosome"/>
</dbReference>
<dbReference type="GO" id="GO:0008712">
    <property type="term" value="F:ADP-glyceromanno-heptose 6-epimerase activity"/>
    <property type="evidence" value="ECO:0007669"/>
    <property type="project" value="UniProtKB-UniRule"/>
</dbReference>
<dbReference type="GO" id="GO:0050661">
    <property type="term" value="F:NADP binding"/>
    <property type="evidence" value="ECO:0007669"/>
    <property type="project" value="InterPro"/>
</dbReference>
<dbReference type="GO" id="GO:0097171">
    <property type="term" value="P:ADP-L-glycero-beta-D-manno-heptose biosynthetic process"/>
    <property type="evidence" value="ECO:0007669"/>
    <property type="project" value="UniProtKB-UniPathway"/>
</dbReference>
<dbReference type="GO" id="GO:0005975">
    <property type="term" value="P:carbohydrate metabolic process"/>
    <property type="evidence" value="ECO:0007669"/>
    <property type="project" value="UniProtKB-UniRule"/>
</dbReference>
<dbReference type="CDD" id="cd05248">
    <property type="entry name" value="ADP_GME_SDR_e"/>
    <property type="match status" value="1"/>
</dbReference>
<dbReference type="Gene3D" id="3.40.50.720">
    <property type="entry name" value="NAD(P)-binding Rossmann-like Domain"/>
    <property type="match status" value="1"/>
</dbReference>
<dbReference type="Gene3D" id="3.90.25.10">
    <property type="entry name" value="UDP-galactose 4-epimerase, domain 1"/>
    <property type="match status" value="1"/>
</dbReference>
<dbReference type="HAMAP" id="MF_01601">
    <property type="entry name" value="Heptose_epimerase"/>
    <property type="match status" value="1"/>
</dbReference>
<dbReference type="InterPro" id="IPR001509">
    <property type="entry name" value="Epimerase_deHydtase"/>
</dbReference>
<dbReference type="InterPro" id="IPR011912">
    <property type="entry name" value="Heptose_epim"/>
</dbReference>
<dbReference type="InterPro" id="IPR036291">
    <property type="entry name" value="NAD(P)-bd_dom_sf"/>
</dbReference>
<dbReference type="NCBIfam" id="TIGR02197">
    <property type="entry name" value="heptose_epim"/>
    <property type="match status" value="1"/>
</dbReference>
<dbReference type="NCBIfam" id="NF008360">
    <property type="entry name" value="PRK11150.1"/>
    <property type="match status" value="1"/>
</dbReference>
<dbReference type="PANTHER" id="PTHR43103:SF3">
    <property type="entry name" value="ADP-L-GLYCERO-D-MANNO-HEPTOSE-6-EPIMERASE"/>
    <property type="match status" value="1"/>
</dbReference>
<dbReference type="PANTHER" id="PTHR43103">
    <property type="entry name" value="NUCLEOSIDE-DIPHOSPHATE-SUGAR EPIMERASE"/>
    <property type="match status" value="1"/>
</dbReference>
<dbReference type="Pfam" id="PF01370">
    <property type="entry name" value="Epimerase"/>
    <property type="match status" value="1"/>
</dbReference>
<dbReference type="SUPFAM" id="SSF51735">
    <property type="entry name" value="NAD(P)-binding Rossmann-fold domains"/>
    <property type="match status" value="1"/>
</dbReference>
<evidence type="ECO:0000255" key="1">
    <source>
        <dbReference type="HAMAP-Rule" id="MF_01601"/>
    </source>
</evidence>
<proteinExistence type="inferred from homology"/>
<reference key="1">
    <citation type="journal article" date="2006" name="J. Bacteriol.">
        <title>Genome sequence of Aeromonas hydrophila ATCC 7966T: jack of all trades.</title>
        <authorList>
            <person name="Seshadri R."/>
            <person name="Joseph S.W."/>
            <person name="Chopra A.K."/>
            <person name="Sha J."/>
            <person name="Shaw J."/>
            <person name="Graf J."/>
            <person name="Haft D.H."/>
            <person name="Wu M."/>
            <person name="Ren Q."/>
            <person name="Rosovitz M.J."/>
            <person name="Madupu R."/>
            <person name="Tallon L."/>
            <person name="Kim M."/>
            <person name="Jin S."/>
            <person name="Vuong H."/>
            <person name="Stine O.C."/>
            <person name="Ali A."/>
            <person name="Horneman A.J."/>
            <person name="Heidelberg J.F."/>
        </authorList>
    </citation>
    <scope>NUCLEOTIDE SEQUENCE [LARGE SCALE GENOMIC DNA]</scope>
    <source>
        <strain>ATCC 7966 / DSM 30187 / BCRC 13018 / CCUG 14551 / JCM 1027 / KCTC 2358 / NCIMB 9240 / NCTC 8049</strain>
    </source>
</reference>
<gene>
    <name evidence="1" type="primary">hldD</name>
    <name type="ordered locus">AHA_4232</name>
</gene>
<feature type="chain" id="PRO_1000069339" description="ADP-L-glycero-D-manno-heptose-6-epimerase">
    <location>
        <begin position="1"/>
        <end position="318"/>
    </location>
</feature>
<feature type="active site" description="Proton acceptor" evidence="1">
    <location>
        <position position="144"/>
    </location>
</feature>
<feature type="active site" description="Proton acceptor" evidence="1">
    <location>
        <position position="182"/>
    </location>
</feature>
<feature type="binding site" evidence="1">
    <location>
        <begin position="10"/>
        <end position="11"/>
    </location>
    <ligand>
        <name>NADP(+)</name>
        <dbReference type="ChEBI" id="CHEBI:58349"/>
    </ligand>
</feature>
<feature type="binding site" evidence="1">
    <location>
        <begin position="31"/>
        <end position="32"/>
    </location>
    <ligand>
        <name>NADP(+)</name>
        <dbReference type="ChEBI" id="CHEBI:58349"/>
    </ligand>
</feature>
<feature type="binding site" evidence="1">
    <location>
        <position position="38"/>
    </location>
    <ligand>
        <name>NADP(+)</name>
        <dbReference type="ChEBI" id="CHEBI:58349"/>
    </ligand>
</feature>
<feature type="binding site" evidence="1">
    <location>
        <position position="53"/>
    </location>
    <ligand>
        <name>NADP(+)</name>
        <dbReference type="ChEBI" id="CHEBI:58349"/>
    </ligand>
</feature>
<feature type="binding site" evidence="1">
    <location>
        <begin position="79"/>
        <end position="83"/>
    </location>
    <ligand>
        <name>NADP(+)</name>
        <dbReference type="ChEBI" id="CHEBI:58349"/>
    </ligand>
</feature>
<feature type="binding site" evidence="1">
    <location>
        <position position="148"/>
    </location>
    <ligand>
        <name>NADP(+)</name>
        <dbReference type="ChEBI" id="CHEBI:58349"/>
    </ligand>
</feature>
<feature type="binding site" evidence="1">
    <location>
        <position position="173"/>
    </location>
    <ligand>
        <name>substrate</name>
    </ligand>
</feature>
<feature type="binding site" evidence="1">
    <location>
        <position position="174"/>
    </location>
    <ligand>
        <name>NADP(+)</name>
        <dbReference type="ChEBI" id="CHEBI:58349"/>
    </ligand>
</feature>
<feature type="binding site" evidence="1">
    <location>
        <position position="182"/>
    </location>
    <ligand>
        <name>NADP(+)</name>
        <dbReference type="ChEBI" id="CHEBI:58349"/>
    </ligand>
</feature>
<feature type="binding site" evidence="1">
    <location>
        <position position="184"/>
    </location>
    <ligand>
        <name>substrate</name>
    </ligand>
</feature>
<feature type="binding site" evidence="1">
    <location>
        <position position="191"/>
    </location>
    <ligand>
        <name>substrate</name>
    </ligand>
</feature>
<feature type="binding site" evidence="1">
    <location>
        <begin position="205"/>
        <end position="208"/>
    </location>
    <ligand>
        <name>substrate</name>
    </ligand>
</feature>
<feature type="binding site" evidence="1">
    <location>
        <position position="218"/>
    </location>
    <ligand>
        <name>substrate</name>
    </ligand>
</feature>
<feature type="binding site" evidence="1">
    <location>
        <position position="282"/>
    </location>
    <ligand>
        <name>substrate</name>
    </ligand>
</feature>
<accession>A0KQV3</accession>